<comment type="function">
    <text evidence="1">Catalyzes the ATP-dependent conversion of 7-carboxy-7-deazaguanine (CDG) to 7-cyano-7-deazaguanine (preQ(0)).</text>
</comment>
<comment type="catalytic activity">
    <reaction evidence="1">
        <text>7-carboxy-7-deazaguanine + NH4(+) + ATP = 7-cyano-7-deazaguanine + ADP + phosphate + H2O + H(+)</text>
        <dbReference type="Rhea" id="RHEA:27982"/>
        <dbReference type="ChEBI" id="CHEBI:15377"/>
        <dbReference type="ChEBI" id="CHEBI:15378"/>
        <dbReference type="ChEBI" id="CHEBI:28938"/>
        <dbReference type="ChEBI" id="CHEBI:30616"/>
        <dbReference type="ChEBI" id="CHEBI:43474"/>
        <dbReference type="ChEBI" id="CHEBI:45075"/>
        <dbReference type="ChEBI" id="CHEBI:61036"/>
        <dbReference type="ChEBI" id="CHEBI:456216"/>
        <dbReference type="EC" id="6.3.4.20"/>
    </reaction>
</comment>
<comment type="cofactor">
    <cofactor evidence="1">
        <name>Zn(2+)</name>
        <dbReference type="ChEBI" id="CHEBI:29105"/>
    </cofactor>
    <text evidence="1">Binds 1 zinc ion per subunit.</text>
</comment>
<comment type="pathway">
    <text evidence="1">Purine metabolism; 7-cyano-7-deazaguanine biosynthesis.</text>
</comment>
<comment type="similarity">
    <text evidence="1">Belongs to the QueC family.</text>
</comment>
<keyword id="KW-0067">ATP-binding</keyword>
<keyword id="KW-0436">Ligase</keyword>
<keyword id="KW-0479">Metal-binding</keyword>
<keyword id="KW-0547">Nucleotide-binding</keyword>
<keyword id="KW-0671">Queuosine biosynthesis</keyword>
<keyword id="KW-0862">Zinc</keyword>
<evidence type="ECO:0000255" key="1">
    <source>
        <dbReference type="HAMAP-Rule" id="MF_01633"/>
    </source>
</evidence>
<protein>
    <recommendedName>
        <fullName evidence="1">7-cyano-7-deazaguanine synthase</fullName>
        <ecNumber evidence="1">6.3.4.20</ecNumber>
    </recommendedName>
    <alternativeName>
        <fullName evidence="1">7-cyano-7-carbaguanine synthase</fullName>
    </alternativeName>
    <alternativeName>
        <fullName evidence="1">PreQ(0) synthase</fullName>
    </alternativeName>
    <alternativeName>
        <fullName evidence="1">Queuosine biosynthesis protein QueC</fullName>
    </alternativeName>
</protein>
<organism>
    <name type="scientific">Neisseria meningitidis serogroup C / serotype 2a (strain ATCC 700532 / DSM 15464 / FAM18)</name>
    <dbReference type="NCBI Taxonomy" id="272831"/>
    <lineage>
        <taxon>Bacteria</taxon>
        <taxon>Pseudomonadati</taxon>
        <taxon>Pseudomonadota</taxon>
        <taxon>Betaproteobacteria</taxon>
        <taxon>Neisseriales</taxon>
        <taxon>Neisseriaceae</taxon>
        <taxon>Neisseria</taxon>
    </lineage>
</organism>
<name>QUEC_NEIMF</name>
<dbReference type="EC" id="6.3.4.20" evidence="1"/>
<dbReference type="EMBL" id="AM421808">
    <property type="protein sequence ID" value="CAM09764.1"/>
    <property type="molecule type" value="Genomic_DNA"/>
</dbReference>
<dbReference type="RefSeq" id="WP_002217873.1">
    <property type="nucleotide sequence ID" value="NC_008767.1"/>
</dbReference>
<dbReference type="SMR" id="A1KSD4"/>
<dbReference type="KEGG" id="nmc:NMC0464"/>
<dbReference type="HOGENOM" id="CLU_081854_0_0_4"/>
<dbReference type="UniPathway" id="UPA00391"/>
<dbReference type="Proteomes" id="UP000002286">
    <property type="component" value="Chromosome"/>
</dbReference>
<dbReference type="GO" id="GO:0005524">
    <property type="term" value="F:ATP binding"/>
    <property type="evidence" value="ECO:0007669"/>
    <property type="project" value="UniProtKB-UniRule"/>
</dbReference>
<dbReference type="GO" id="GO:0016879">
    <property type="term" value="F:ligase activity, forming carbon-nitrogen bonds"/>
    <property type="evidence" value="ECO:0007669"/>
    <property type="project" value="UniProtKB-UniRule"/>
</dbReference>
<dbReference type="GO" id="GO:0008270">
    <property type="term" value="F:zinc ion binding"/>
    <property type="evidence" value="ECO:0007669"/>
    <property type="project" value="UniProtKB-UniRule"/>
</dbReference>
<dbReference type="GO" id="GO:0008616">
    <property type="term" value="P:queuosine biosynthetic process"/>
    <property type="evidence" value="ECO:0007669"/>
    <property type="project" value="UniProtKB-UniRule"/>
</dbReference>
<dbReference type="CDD" id="cd01995">
    <property type="entry name" value="QueC-like"/>
    <property type="match status" value="1"/>
</dbReference>
<dbReference type="FunFam" id="3.40.50.620:FF:000017">
    <property type="entry name" value="7-cyano-7-deazaguanine synthase"/>
    <property type="match status" value="1"/>
</dbReference>
<dbReference type="Gene3D" id="3.40.50.620">
    <property type="entry name" value="HUPs"/>
    <property type="match status" value="1"/>
</dbReference>
<dbReference type="HAMAP" id="MF_01633">
    <property type="entry name" value="QueC"/>
    <property type="match status" value="1"/>
</dbReference>
<dbReference type="InterPro" id="IPR018317">
    <property type="entry name" value="QueC"/>
</dbReference>
<dbReference type="InterPro" id="IPR014729">
    <property type="entry name" value="Rossmann-like_a/b/a_fold"/>
</dbReference>
<dbReference type="NCBIfam" id="TIGR00364">
    <property type="entry name" value="7-cyano-7-deazaguanine synthase QueC"/>
    <property type="match status" value="1"/>
</dbReference>
<dbReference type="PANTHER" id="PTHR42914">
    <property type="entry name" value="7-CYANO-7-DEAZAGUANINE SYNTHASE"/>
    <property type="match status" value="1"/>
</dbReference>
<dbReference type="PANTHER" id="PTHR42914:SF1">
    <property type="entry name" value="7-CYANO-7-DEAZAGUANINE SYNTHASE"/>
    <property type="match status" value="1"/>
</dbReference>
<dbReference type="Pfam" id="PF06508">
    <property type="entry name" value="QueC"/>
    <property type="match status" value="1"/>
</dbReference>
<dbReference type="PIRSF" id="PIRSF006293">
    <property type="entry name" value="ExsB"/>
    <property type="match status" value="1"/>
</dbReference>
<dbReference type="SUPFAM" id="SSF52402">
    <property type="entry name" value="Adenine nucleotide alpha hydrolases-like"/>
    <property type="match status" value="1"/>
</dbReference>
<sequence length="219" mass="24485">MSNQKALVIFSGGQDSTTCLIQAIQIYGRENVQAITFQYGQRHAVELERARWIAQDLGVKQTVLDLSLMRQITHNALMDDTAAIETAENGVPNTFVDGRNALFLLYAAIYAKGQGIRHIIAGVCETDFSGYPDCRDVFVKSMNVTLNLAMDYDFQIHTPLMYLTKAQTWALADEMGVLDYIREQTHTCYNGIVGGCRECPSCILRERGLAEYLESKKAV</sequence>
<reference key="1">
    <citation type="journal article" date="2007" name="PLoS Genet.">
        <title>Meningococcal genetic variation mechanisms viewed through comparative analysis of serogroup C strain FAM18.</title>
        <authorList>
            <person name="Bentley S.D."/>
            <person name="Vernikos G.S."/>
            <person name="Snyder L.A.S."/>
            <person name="Churcher C."/>
            <person name="Arrowsmith C."/>
            <person name="Chillingworth T."/>
            <person name="Cronin A."/>
            <person name="Davis P.H."/>
            <person name="Holroyd N.E."/>
            <person name="Jagels K."/>
            <person name="Maddison M."/>
            <person name="Moule S."/>
            <person name="Rabbinowitsch E."/>
            <person name="Sharp S."/>
            <person name="Unwin L."/>
            <person name="Whitehead S."/>
            <person name="Quail M.A."/>
            <person name="Achtman M."/>
            <person name="Barrell B.G."/>
            <person name="Saunders N.J."/>
            <person name="Parkhill J."/>
        </authorList>
    </citation>
    <scope>NUCLEOTIDE SEQUENCE [LARGE SCALE GENOMIC DNA]</scope>
    <source>
        <strain>ATCC 700532 / DSM 15464 / FAM18</strain>
    </source>
</reference>
<feature type="chain" id="PRO_1000069783" description="7-cyano-7-deazaguanine synthase">
    <location>
        <begin position="1"/>
        <end position="219"/>
    </location>
</feature>
<feature type="binding site" evidence="1">
    <location>
        <begin position="10"/>
        <end position="20"/>
    </location>
    <ligand>
        <name>ATP</name>
        <dbReference type="ChEBI" id="CHEBI:30616"/>
    </ligand>
</feature>
<feature type="binding site" evidence="1">
    <location>
        <position position="188"/>
    </location>
    <ligand>
        <name>Zn(2+)</name>
        <dbReference type="ChEBI" id="CHEBI:29105"/>
    </ligand>
</feature>
<feature type="binding site" evidence="1">
    <location>
        <position position="196"/>
    </location>
    <ligand>
        <name>Zn(2+)</name>
        <dbReference type="ChEBI" id="CHEBI:29105"/>
    </ligand>
</feature>
<feature type="binding site" evidence="1">
    <location>
        <position position="199"/>
    </location>
    <ligand>
        <name>Zn(2+)</name>
        <dbReference type="ChEBI" id="CHEBI:29105"/>
    </ligand>
</feature>
<feature type="binding site" evidence="1">
    <location>
        <position position="202"/>
    </location>
    <ligand>
        <name>Zn(2+)</name>
        <dbReference type="ChEBI" id="CHEBI:29105"/>
    </ligand>
</feature>
<proteinExistence type="inferred from homology"/>
<accession>A1KSD4</accession>
<gene>
    <name evidence="1" type="primary">queC</name>
    <name type="ordered locus">NMC0464</name>
</gene>